<evidence type="ECO:0000255" key="1">
    <source>
        <dbReference type="HAMAP-Rule" id="MF_00028"/>
    </source>
</evidence>
<sequence>MPLMVVGTSSHVGKSTMVAAICRCLVRRGIRVAPFKSQNMSLNSFVTADGGEIGIAQAMQAWAARLSPTIDMNPVLLKPKGDCTSQVVLLGHPYKDVPIAEYYMETPYLLTEALAAYGRLVEEYGEVVVEGAGGAAEVNLYDRDIANTLLAEKLGIPLILVADIERGGVFAQVYGTIKLLPAPLRPLVKGIIINKFRGDPAIFANGIRIIEELTGVTVLGVVPHFSLPLPSEDSLSIGDKRHRDLPVRIAVIRLPHISNFTDFELLEQYAAVEYVPCGGSLAGYDCIIIPGTKNTIEDLAALREAGTDREILSAREQGIPVIGICGGYQMLGATLIDDGFESAAGEYPGLGLLDCSTRFATYSKNTMQVKRLAAPVSPILVSMGEVTGYEIHMGVTDPGTDQEAFSGDGRVTADGLVFGTYMHGLFLNPSAADALLAYLYAKKELTYSPIQTGAADPYDLLAGLFEEHVDMEAIVALLEK</sequence>
<feature type="chain" id="PRO_0000332404" description="Probable cobyric acid synthase">
    <location>
        <begin position="1"/>
        <end position="480"/>
    </location>
</feature>
<feature type="domain" description="GATase cobBQ-type" evidence="1">
    <location>
        <begin position="246"/>
        <end position="431"/>
    </location>
</feature>
<feature type="active site" description="Nucleophile" evidence="1">
    <location>
        <position position="325"/>
    </location>
</feature>
<feature type="active site" evidence="1">
    <location>
        <position position="423"/>
    </location>
</feature>
<organism>
    <name type="scientific">Methanoregula boonei (strain DSM 21154 / JCM 14090 / 6A8)</name>
    <dbReference type="NCBI Taxonomy" id="456442"/>
    <lineage>
        <taxon>Archaea</taxon>
        <taxon>Methanobacteriati</taxon>
        <taxon>Methanobacteriota</taxon>
        <taxon>Stenosarchaea group</taxon>
        <taxon>Methanomicrobia</taxon>
        <taxon>Methanomicrobiales</taxon>
        <taxon>Methanoregulaceae</taxon>
        <taxon>Methanoregula</taxon>
    </lineage>
</organism>
<protein>
    <recommendedName>
        <fullName evidence="1">Probable cobyric acid synthase</fullName>
    </recommendedName>
</protein>
<proteinExistence type="inferred from homology"/>
<dbReference type="EMBL" id="CP000780">
    <property type="protein sequence ID" value="ABS56416.1"/>
    <property type="molecule type" value="Genomic_DNA"/>
</dbReference>
<dbReference type="RefSeq" id="WP_012107469.1">
    <property type="nucleotide sequence ID" value="NC_009712.1"/>
</dbReference>
<dbReference type="SMR" id="A7I9K5"/>
<dbReference type="STRING" id="456442.Mboo_1901"/>
<dbReference type="GeneID" id="5410858"/>
<dbReference type="KEGG" id="mbn:Mboo_1901"/>
<dbReference type="eggNOG" id="arCOG00105">
    <property type="taxonomic scope" value="Archaea"/>
</dbReference>
<dbReference type="HOGENOM" id="CLU_019250_2_2_2"/>
<dbReference type="OrthoDB" id="53136at2157"/>
<dbReference type="UniPathway" id="UPA00148"/>
<dbReference type="Proteomes" id="UP000002408">
    <property type="component" value="Chromosome"/>
</dbReference>
<dbReference type="GO" id="GO:0015420">
    <property type="term" value="F:ABC-type vitamin B12 transporter activity"/>
    <property type="evidence" value="ECO:0007669"/>
    <property type="project" value="UniProtKB-UniRule"/>
</dbReference>
<dbReference type="GO" id="GO:0003824">
    <property type="term" value="F:catalytic activity"/>
    <property type="evidence" value="ECO:0007669"/>
    <property type="project" value="InterPro"/>
</dbReference>
<dbReference type="GO" id="GO:0009236">
    <property type="term" value="P:cobalamin biosynthetic process"/>
    <property type="evidence" value="ECO:0007669"/>
    <property type="project" value="UniProtKB-UniRule"/>
</dbReference>
<dbReference type="CDD" id="cd05389">
    <property type="entry name" value="CobQ_N"/>
    <property type="match status" value="1"/>
</dbReference>
<dbReference type="CDD" id="cd01750">
    <property type="entry name" value="GATase1_CobQ"/>
    <property type="match status" value="1"/>
</dbReference>
<dbReference type="Gene3D" id="3.40.50.880">
    <property type="match status" value="1"/>
</dbReference>
<dbReference type="Gene3D" id="3.40.50.300">
    <property type="entry name" value="P-loop containing nucleotide triphosphate hydrolases"/>
    <property type="match status" value="1"/>
</dbReference>
<dbReference type="HAMAP" id="MF_00028">
    <property type="entry name" value="CobQ"/>
    <property type="match status" value="1"/>
</dbReference>
<dbReference type="InterPro" id="IPR029062">
    <property type="entry name" value="Class_I_gatase-like"/>
</dbReference>
<dbReference type="InterPro" id="IPR002586">
    <property type="entry name" value="CobQ/CobB/MinD/ParA_Nub-bd_dom"/>
</dbReference>
<dbReference type="InterPro" id="IPR033949">
    <property type="entry name" value="CobQ_GATase1"/>
</dbReference>
<dbReference type="InterPro" id="IPR047045">
    <property type="entry name" value="CobQ_N"/>
</dbReference>
<dbReference type="InterPro" id="IPR004459">
    <property type="entry name" value="CobQ_synth"/>
</dbReference>
<dbReference type="InterPro" id="IPR011698">
    <property type="entry name" value="GATase_3"/>
</dbReference>
<dbReference type="InterPro" id="IPR027417">
    <property type="entry name" value="P-loop_NTPase"/>
</dbReference>
<dbReference type="NCBIfam" id="TIGR00313">
    <property type="entry name" value="cobQ"/>
    <property type="match status" value="1"/>
</dbReference>
<dbReference type="NCBIfam" id="NF001989">
    <property type="entry name" value="PRK00784.1"/>
    <property type="match status" value="1"/>
</dbReference>
<dbReference type="PANTHER" id="PTHR21343:SF1">
    <property type="entry name" value="COBYRIC ACID SYNTHASE"/>
    <property type="match status" value="1"/>
</dbReference>
<dbReference type="PANTHER" id="PTHR21343">
    <property type="entry name" value="DETHIOBIOTIN SYNTHETASE"/>
    <property type="match status" value="1"/>
</dbReference>
<dbReference type="Pfam" id="PF01656">
    <property type="entry name" value="CbiA"/>
    <property type="match status" value="1"/>
</dbReference>
<dbReference type="Pfam" id="PF07685">
    <property type="entry name" value="GATase_3"/>
    <property type="match status" value="1"/>
</dbReference>
<dbReference type="SUPFAM" id="SSF52317">
    <property type="entry name" value="Class I glutamine amidotransferase-like"/>
    <property type="match status" value="1"/>
</dbReference>
<dbReference type="SUPFAM" id="SSF52540">
    <property type="entry name" value="P-loop containing nucleoside triphosphate hydrolases"/>
    <property type="match status" value="1"/>
</dbReference>
<dbReference type="PROSITE" id="PS51274">
    <property type="entry name" value="GATASE_COBBQ"/>
    <property type="match status" value="1"/>
</dbReference>
<keyword id="KW-0169">Cobalamin biosynthesis</keyword>
<keyword id="KW-0315">Glutamine amidotransferase</keyword>
<keyword id="KW-1185">Reference proteome</keyword>
<reference key="1">
    <citation type="journal article" date="2015" name="Microbiology">
        <title>Genome of Methanoregula boonei 6A8 reveals adaptations to oligotrophic peatland environments.</title>
        <authorList>
            <person name="Braeuer S."/>
            <person name="Cadillo-Quiroz H."/>
            <person name="Kyrpides N."/>
            <person name="Woyke T."/>
            <person name="Goodwin L."/>
            <person name="Detter C."/>
            <person name="Podell S."/>
            <person name="Yavitt J.B."/>
            <person name="Zinder S.H."/>
        </authorList>
    </citation>
    <scope>NUCLEOTIDE SEQUENCE [LARGE SCALE GENOMIC DNA]</scope>
    <source>
        <strain>DSM 21154 / JCM 14090 / 6A8</strain>
    </source>
</reference>
<gene>
    <name evidence="1" type="primary">cobQ</name>
    <name type="ordered locus">Mboo_1901</name>
</gene>
<name>COBQ_METB6</name>
<comment type="function">
    <text evidence="1">Catalyzes amidations at positions B, D, E, and G on adenosylcobyrinic A,C-diamide. NH(2) groups are provided by glutamine, and one molecule of ATP is hydrogenolyzed for each amidation.</text>
</comment>
<comment type="pathway">
    <text evidence="1">Cofactor biosynthesis; adenosylcobalamin biosynthesis.</text>
</comment>
<comment type="similarity">
    <text evidence="1">Belongs to the CobB/CobQ family. CobQ subfamily.</text>
</comment>
<accession>A7I9K5</accession>